<evidence type="ECO:0000255" key="1">
    <source>
        <dbReference type="HAMAP-Rule" id="MF_00111"/>
    </source>
</evidence>
<protein>
    <recommendedName>
        <fullName evidence="1">UDP-N-acetylglucosamine 1-carboxyvinyltransferase</fullName>
        <ecNumber evidence="1">2.5.1.7</ecNumber>
    </recommendedName>
    <alternativeName>
        <fullName evidence="1">Enoylpyruvate transferase</fullName>
    </alternativeName>
    <alternativeName>
        <fullName evidence="1">UDP-N-acetylglucosamine enolpyruvyl transferase</fullName>
        <shortName evidence="1">EPT</shortName>
    </alternativeName>
</protein>
<sequence length="421" mass="46070">MGKLVVQGGTVLEGEVEISGSKNAALPIMAAAILCDEEIILKNVPRLQDVFVMIDILRSIGFRVEFDENELKIKRENDISQEVPYELVRKMRASFNVLGPIAVRTGRAKVALPGGCSIGVRPVDFHLEGLKKMGFSIKVEHGFVEATFERRTDQVTITLPFPSVGATEHLMTTAALLEGTRVVIENAAMEPEIVDLQNFINRMGGRIEGAGTSRIVIEGVEKMQGVEYSIIPDRIEAGTYLVAIAASRGKGLVKNVNPDHLTNFFEKLEETGVKLKVFGNEVEIEMRERPEAVDVTTNPYPGFPTDLQPQMMAYLSIASGVSVITENVFKTRFLHVDELKRMGADIEVSGNVAIVKGVEKLSGAPVEGTDLRATAALLIAGIIADGVTEISNVEHIFRGYEDVIDKFSKLGAKIEYVEKEN</sequence>
<proteinExistence type="inferred from homology"/>
<dbReference type="EC" id="2.5.1.7" evidence="1"/>
<dbReference type="EMBL" id="CP000969">
    <property type="protein sequence ID" value="ACB09191.1"/>
    <property type="molecule type" value="Genomic_DNA"/>
</dbReference>
<dbReference type="RefSeq" id="WP_011943403.1">
    <property type="nucleotide sequence ID" value="NC_010483.1"/>
</dbReference>
<dbReference type="SMR" id="B1LA43"/>
<dbReference type="KEGG" id="trq:TRQ2_0839"/>
<dbReference type="HOGENOM" id="CLU_027387_0_0_0"/>
<dbReference type="UniPathway" id="UPA00219"/>
<dbReference type="Proteomes" id="UP000001687">
    <property type="component" value="Chromosome"/>
</dbReference>
<dbReference type="GO" id="GO:0005737">
    <property type="term" value="C:cytoplasm"/>
    <property type="evidence" value="ECO:0007669"/>
    <property type="project" value="UniProtKB-SubCell"/>
</dbReference>
<dbReference type="GO" id="GO:0008760">
    <property type="term" value="F:UDP-N-acetylglucosamine 1-carboxyvinyltransferase activity"/>
    <property type="evidence" value="ECO:0007669"/>
    <property type="project" value="UniProtKB-UniRule"/>
</dbReference>
<dbReference type="GO" id="GO:0051301">
    <property type="term" value="P:cell division"/>
    <property type="evidence" value="ECO:0007669"/>
    <property type="project" value="UniProtKB-KW"/>
</dbReference>
<dbReference type="GO" id="GO:0071555">
    <property type="term" value="P:cell wall organization"/>
    <property type="evidence" value="ECO:0007669"/>
    <property type="project" value="UniProtKB-KW"/>
</dbReference>
<dbReference type="GO" id="GO:0009252">
    <property type="term" value="P:peptidoglycan biosynthetic process"/>
    <property type="evidence" value="ECO:0007669"/>
    <property type="project" value="UniProtKB-UniRule"/>
</dbReference>
<dbReference type="GO" id="GO:0008360">
    <property type="term" value="P:regulation of cell shape"/>
    <property type="evidence" value="ECO:0007669"/>
    <property type="project" value="UniProtKB-KW"/>
</dbReference>
<dbReference type="GO" id="GO:0019277">
    <property type="term" value="P:UDP-N-acetylgalactosamine biosynthetic process"/>
    <property type="evidence" value="ECO:0007669"/>
    <property type="project" value="InterPro"/>
</dbReference>
<dbReference type="CDD" id="cd01555">
    <property type="entry name" value="UdpNAET"/>
    <property type="match status" value="1"/>
</dbReference>
<dbReference type="Gene3D" id="3.65.10.10">
    <property type="entry name" value="Enolpyruvate transferase domain"/>
    <property type="match status" value="2"/>
</dbReference>
<dbReference type="HAMAP" id="MF_00111">
    <property type="entry name" value="MurA"/>
    <property type="match status" value="1"/>
</dbReference>
<dbReference type="InterPro" id="IPR001986">
    <property type="entry name" value="Enolpyruvate_Tfrase_dom"/>
</dbReference>
<dbReference type="InterPro" id="IPR036968">
    <property type="entry name" value="Enolpyruvate_Tfrase_sf"/>
</dbReference>
<dbReference type="InterPro" id="IPR050068">
    <property type="entry name" value="MurA_subfamily"/>
</dbReference>
<dbReference type="InterPro" id="IPR013792">
    <property type="entry name" value="RNA3'P_cycl/enolpyr_Trfase_a/b"/>
</dbReference>
<dbReference type="InterPro" id="IPR005750">
    <property type="entry name" value="UDP_GlcNAc_COvinyl_MurA"/>
</dbReference>
<dbReference type="NCBIfam" id="TIGR01072">
    <property type="entry name" value="murA"/>
    <property type="match status" value="1"/>
</dbReference>
<dbReference type="NCBIfam" id="NF006873">
    <property type="entry name" value="PRK09369.1"/>
    <property type="match status" value="1"/>
</dbReference>
<dbReference type="PANTHER" id="PTHR43783">
    <property type="entry name" value="UDP-N-ACETYLGLUCOSAMINE 1-CARBOXYVINYLTRANSFERASE"/>
    <property type="match status" value="1"/>
</dbReference>
<dbReference type="PANTHER" id="PTHR43783:SF1">
    <property type="entry name" value="UDP-N-ACETYLGLUCOSAMINE 1-CARBOXYVINYLTRANSFERASE"/>
    <property type="match status" value="1"/>
</dbReference>
<dbReference type="Pfam" id="PF00275">
    <property type="entry name" value="EPSP_synthase"/>
    <property type="match status" value="1"/>
</dbReference>
<dbReference type="SUPFAM" id="SSF55205">
    <property type="entry name" value="EPT/RTPC-like"/>
    <property type="match status" value="1"/>
</dbReference>
<organism>
    <name type="scientific">Thermotoga sp. (strain RQ2)</name>
    <dbReference type="NCBI Taxonomy" id="126740"/>
    <lineage>
        <taxon>Bacteria</taxon>
        <taxon>Thermotogati</taxon>
        <taxon>Thermotogota</taxon>
        <taxon>Thermotogae</taxon>
        <taxon>Thermotogales</taxon>
        <taxon>Thermotogaceae</taxon>
        <taxon>Thermotoga</taxon>
    </lineage>
</organism>
<reference key="1">
    <citation type="journal article" date="2011" name="J. Bacteriol.">
        <title>Genome sequence of Thermotoga sp. strain RQ2, a hyperthermophilic bacterium isolated from a geothermally heated region of the seafloor near Ribeira Quente, the Azores.</title>
        <authorList>
            <person name="Swithers K.S."/>
            <person name="DiPippo J.L."/>
            <person name="Bruce D.C."/>
            <person name="Detter C."/>
            <person name="Tapia R."/>
            <person name="Han S."/>
            <person name="Saunders E."/>
            <person name="Goodwin L.A."/>
            <person name="Han J."/>
            <person name="Woyke T."/>
            <person name="Pitluck S."/>
            <person name="Pennacchio L."/>
            <person name="Nolan M."/>
            <person name="Mikhailova N."/>
            <person name="Lykidis A."/>
            <person name="Land M.L."/>
            <person name="Brettin T."/>
            <person name="Stetter K.O."/>
            <person name="Nelson K.E."/>
            <person name="Gogarten J.P."/>
            <person name="Noll K.M."/>
        </authorList>
    </citation>
    <scope>NUCLEOTIDE SEQUENCE [LARGE SCALE GENOMIC DNA]</scope>
    <source>
        <strain>RQ2</strain>
    </source>
</reference>
<feature type="chain" id="PRO_1000094728" description="UDP-N-acetylglucosamine 1-carboxyvinyltransferase">
    <location>
        <begin position="1"/>
        <end position="421"/>
    </location>
</feature>
<feature type="active site" description="Proton donor" evidence="1">
    <location>
        <position position="116"/>
    </location>
</feature>
<feature type="binding site" evidence="1">
    <location>
        <begin position="22"/>
        <end position="23"/>
    </location>
    <ligand>
        <name>phosphoenolpyruvate</name>
        <dbReference type="ChEBI" id="CHEBI:58702"/>
    </ligand>
</feature>
<feature type="binding site" evidence="1">
    <location>
        <position position="92"/>
    </location>
    <ligand>
        <name>UDP-N-acetyl-alpha-D-glucosamine</name>
        <dbReference type="ChEBI" id="CHEBI:57705"/>
    </ligand>
</feature>
<feature type="binding site" evidence="1">
    <location>
        <position position="306"/>
    </location>
    <ligand>
        <name>UDP-N-acetyl-alpha-D-glucosamine</name>
        <dbReference type="ChEBI" id="CHEBI:57705"/>
    </ligand>
</feature>
<feature type="binding site" evidence="1">
    <location>
        <position position="328"/>
    </location>
    <ligand>
        <name>UDP-N-acetyl-alpha-D-glucosamine</name>
        <dbReference type="ChEBI" id="CHEBI:57705"/>
    </ligand>
</feature>
<feature type="modified residue" description="2-(S-cysteinyl)pyruvic acid O-phosphothioketal" evidence="1">
    <location>
        <position position="116"/>
    </location>
</feature>
<accession>B1LA43</accession>
<comment type="function">
    <text evidence="1">Cell wall formation. Adds enolpyruvyl to UDP-N-acetylglucosamine.</text>
</comment>
<comment type="catalytic activity">
    <reaction evidence="1">
        <text>phosphoenolpyruvate + UDP-N-acetyl-alpha-D-glucosamine = UDP-N-acetyl-3-O-(1-carboxyvinyl)-alpha-D-glucosamine + phosphate</text>
        <dbReference type="Rhea" id="RHEA:18681"/>
        <dbReference type="ChEBI" id="CHEBI:43474"/>
        <dbReference type="ChEBI" id="CHEBI:57705"/>
        <dbReference type="ChEBI" id="CHEBI:58702"/>
        <dbReference type="ChEBI" id="CHEBI:68483"/>
        <dbReference type="EC" id="2.5.1.7"/>
    </reaction>
</comment>
<comment type="pathway">
    <text evidence="1">Cell wall biogenesis; peptidoglycan biosynthesis.</text>
</comment>
<comment type="subcellular location">
    <subcellularLocation>
        <location evidence="1">Cytoplasm</location>
    </subcellularLocation>
</comment>
<comment type="similarity">
    <text evidence="1">Belongs to the EPSP synthase family. MurA subfamily.</text>
</comment>
<name>MURA_THESQ</name>
<keyword id="KW-0131">Cell cycle</keyword>
<keyword id="KW-0132">Cell division</keyword>
<keyword id="KW-0133">Cell shape</keyword>
<keyword id="KW-0961">Cell wall biogenesis/degradation</keyword>
<keyword id="KW-0963">Cytoplasm</keyword>
<keyword id="KW-0573">Peptidoglycan synthesis</keyword>
<keyword id="KW-0670">Pyruvate</keyword>
<keyword id="KW-0808">Transferase</keyword>
<gene>
    <name evidence="1" type="primary">murA</name>
    <name type="ordered locus">TRQ2_0839</name>
</gene>